<reference key="1">
    <citation type="journal article" date="2000" name="Nature">
        <title>Complete DNA sequence of a serogroup A strain of Neisseria meningitidis Z2491.</title>
        <authorList>
            <person name="Parkhill J."/>
            <person name="Achtman M."/>
            <person name="James K.D."/>
            <person name="Bentley S.D."/>
            <person name="Churcher C.M."/>
            <person name="Klee S.R."/>
            <person name="Morelli G."/>
            <person name="Basham D."/>
            <person name="Brown D."/>
            <person name="Chillingworth T."/>
            <person name="Davies R.M."/>
            <person name="Davis P."/>
            <person name="Devlin K."/>
            <person name="Feltwell T."/>
            <person name="Hamlin N."/>
            <person name="Holroyd S."/>
            <person name="Jagels K."/>
            <person name="Leather S."/>
            <person name="Moule S."/>
            <person name="Mungall K.L."/>
            <person name="Quail M.A."/>
            <person name="Rajandream M.A."/>
            <person name="Rutherford K.M."/>
            <person name="Simmonds M."/>
            <person name="Skelton J."/>
            <person name="Whitehead S."/>
            <person name="Spratt B.G."/>
            <person name="Barrell B.G."/>
        </authorList>
    </citation>
    <scope>NUCLEOTIDE SEQUENCE [LARGE SCALE GENOMIC DNA]</scope>
    <source>
        <strain>DSM 15465 / Z2491</strain>
    </source>
</reference>
<feature type="chain" id="PRO_0000199364" description="Formate--tetrahydrofolate ligase">
    <location>
        <begin position="1"/>
        <end position="558"/>
    </location>
</feature>
<feature type="binding site" evidence="1">
    <location>
        <begin position="66"/>
        <end position="73"/>
    </location>
    <ligand>
        <name>ATP</name>
        <dbReference type="ChEBI" id="CHEBI:30616"/>
    </ligand>
</feature>
<protein>
    <recommendedName>
        <fullName evidence="1">Formate--tetrahydrofolate ligase</fullName>
        <ecNumber evidence="1">6.3.4.3</ecNumber>
    </recommendedName>
    <alternativeName>
        <fullName evidence="1">Formyltetrahydrofolate synthetase</fullName>
        <shortName evidence="1">FHS</shortName>
        <shortName evidence="1">FTHFS</shortName>
    </alternativeName>
</protein>
<dbReference type="EC" id="6.3.4.3" evidence="1"/>
<dbReference type="EMBL" id="AL157959">
    <property type="protein sequence ID" value="CAM07883.1"/>
    <property type="molecule type" value="Genomic_DNA"/>
</dbReference>
<dbReference type="PIR" id="E81981">
    <property type="entry name" value="E81981"/>
</dbReference>
<dbReference type="RefSeq" id="WP_002247056.1">
    <property type="nucleotide sequence ID" value="NC_003116.1"/>
</dbReference>
<dbReference type="SMR" id="Q9JVY8"/>
<dbReference type="EnsemblBacteria" id="CAM07883">
    <property type="protein sequence ID" value="CAM07883"/>
    <property type="gene ID" value="NMA0617"/>
</dbReference>
<dbReference type="GeneID" id="93386746"/>
<dbReference type="KEGG" id="nma:NMA0617"/>
<dbReference type="HOGENOM" id="CLU_003601_3_3_4"/>
<dbReference type="UniPathway" id="UPA00193"/>
<dbReference type="Proteomes" id="UP000000626">
    <property type="component" value="Chromosome"/>
</dbReference>
<dbReference type="GO" id="GO:0005524">
    <property type="term" value="F:ATP binding"/>
    <property type="evidence" value="ECO:0007669"/>
    <property type="project" value="UniProtKB-UniRule"/>
</dbReference>
<dbReference type="GO" id="GO:0004329">
    <property type="term" value="F:formate-tetrahydrofolate ligase activity"/>
    <property type="evidence" value="ECO:0007669"/>
    <property type="project" value="UniProtKB-UniRule"/>
</dbReference>
<dbReference type="GO" id="GO:0035999">
    <property type="term" value="P:tetrahydrofolate interconversion"/>
    <property type="evidence" value="ECO:0007669"/>
    <property type="project" value="UniProtKB-UniRule"/>
</dbReference>
<dbReference type="CDD" id="cd00477">
    <property type="entry name" value="FTHFS"/>
    <property type="match status" value="1"/>
</dbReference>
<dbReference type="FunFam" id="3.30.1510.10:FF:000001">
    <property type="entry name" value="Formate--tetrahydrofolate ligase"/>
    <property type="match status" value="1"/>
</dbReference>
<dbReference type="FunFam" id="3.10.410.10:FF:000001">
    <property type="entry name" value="Putative formate--tetrahydrofolate ligase"/>
    <property type="match status" value="1"/>
</dbReference>
<dbReference type="Gene3D" id="3.30.1510.10">
    <property type="entry name" value="Domain 2, N(10)-formyltetrahydrofolate synthetase"/>
    <property type="match status" value="1"/>
</dbReference>
<dbReference type="Gene3D" id="3.10.410.10">
    <property type="entry name" value="Formyltetrahydrofolate synthetase, domain 3"/>
    <property type="match status" value="1"/>
</dbReference>
<dbReference type="Gene3D" id="3.40.50.300">
    <property type="entry name" value="P-loop containing nucleotide triphosphate hydrolases"/>
    <property type="match status" value="1"/>
</dbReference>
<dbReference type="HAMAP" id="MF_01543">
    <property type="entry name" value="FTHFS"/>
    <property type="match status" value="1"/>
</dbReference>
<dbReference type="InterPro" id="IPR000559">
    <property type="entry name" value="Formate_THF_ligase"/>
</dbReference>
<dbReference type="InterPro" id="IPR020628">
    <property type="entry name" value="Formate_THF_ligase_CS"/>
</dbReference>
<dbReference type="InterPro" id="IPR027417">
    <property type="entry name" value="P-loop_NTPase"/>
</dbReference>
<dbReference type="NCBIfam" id="NF010030">
    <property type="entry name" value="PRK13505.1"/>
    <property type="match status" value="1"/>
</dbReference>
<dbReference type="Pfam" id="PF01268">
    <property type="entry name" value="FTHFS"/>
    <property type="match status" value="1"/>
</dbReference>
<dbReference type="SUPFAM" id="SSF52540">
    <property type="entry name" value="P-loop containing nucleoside triphosphate hydrolases"/>
    <property type="match status" value="1"/>
</dbReference>
<dbReference type="PROSITE" id="PS00721">
    <property type="entry name" value="FTHFS_1"/>
    <property type="match status" value="1"/>
</dbReference>
<dbReference type="PROSITE" id="PS00722">
    <property type="entry name" value="FTHFS_2"/>
    <property type="match status" value="1"/>
</dbReference>
<accession>Q9JVY8</accession>
<accession>A1IQ57</accession>
<sequence>MSFKTDAEIAQSSTMRPIGEIAAKLGLNVDNIEPYGHYKAKINPAEAFKLPQKQGRLILVTAINPTPAGEGKTTVTIGLADALRHIGKDSVIALREPSLGPVFGVKGGAAGGGYAQVLPMEDINLHFTGDFHAIGAANNLLAAMLDNHIYQGNELNIDPKRVLWRRVVDMNDRQLRNIIDGMGKPVDGVMRPDGFDITVASEVMAVFCLAKDISDLKERLGNILVAYAKDGSPVYAKDLKANGAMAALLKDAIKPNLVQTIEGTPAFVHGGPFANIAHGCNSVTATRLAKHLADYAVTEAGFGADLGAEKFCDIKCRLAGLKPDAAVVVATVRALKYNGGVERANLGEENLDALEKGLPNLLKHISNLKNVFGLPVVVALNRFVSDSDAELAMIEKACAEHGVEVSLTEVWGKGGAGGADLARKVVNAIESQTNNFGFAYDVELGIKDKIRAIAQKVYGAEDVDFSAEASAEIASLEKLGLDKMPICMAKTQYSLSDNAKLLGCPEDFRIAVRGITVSAGAGFIVALCGNMMKMPGLPKVPAAEKIDVDAEGVIHGLF</sequence>
<gene>
    <name evidence="1" type="primary">fhs</name>
    <name type="ordered locus">NMA0617</name>
</gene>
<organism>
    <name type="scientific">Neisseria meningitidis serogroup A / serotype 4A (strain DSM 15465 / Z2491)</name>
    <dbReference type="NCBI Taxonomy" id="122587"/>
    <lineage>
        <taxon>Bacteria</taxon>
        <taxon>Pseudomonadati</taxon>
        <taxon>Pseudomonadota</taxon>
        <taxon>Betaproteobacteria</taxon>
        <taxon>Neisseriales</taxon>
        <taxon>Neisseriaceae</taxon>
        <taxon>Neisseria</taxon>
    </lineage>
</organism>
<proteinExistence type="inferred from homology"/>
<comment type="catalytic activity">
    <reaction evidence="1">
        <text>(6S)-5,6,7,8-tetrahydrofolate + formate + ATP = (6R)-10-formyltetrahydrofolate + ADP + phosphate</text>
        <dbReference type="Rhea" id="RHEA:20221"/>
        <dbReference type="ChEBI" id="CHEBI:15740"/>
        <dbReference type="ChEBI" id="CHEBI:30616"/>
        <dbReference type="ChEBI" id="CHEBI:43474"/>
        <dbReference type="ChEBI" id="CHEBI:57453"/>
        <dbReference type="ChEBI" id="CHEBI:195366"/>
        <dbReference type="ChEBI" id="CHEBI:456216"/>
        <dbReference type="EC" id="6.3.4.3"/>
    </reaction>
</comment>
<comment type="pathway">
    <text evidence="1">One-carbon metabolism; tetrahydrofolate interconversion.</text>
</comment>
<comment type="similarity">
    <text evidence="1">Belongs to the formate--tetrahydrofolate ligase family.</text>
</comment>
<name>FTHS_NEIMA</name>
<evidence type="ECO:0000255" key="1">
    <source>
        <dbReference type="HAMAP-Rule" id="MF_01543"/>
    </source>
</evidence>
<keyword id="KW-0067">ATP-binding</keyword>
<keyword id="KW-0436">Ligase</keyword>
<keyword id="KW-0547">Nucleotide-binding</keyword>
<keyword id="KW-0554">One-carbon metabolism</keyword>